<sequence length="549" mass="63601">MLNQKLNPTPSEDLTIDVDLLYETDPCELKLDEMIEAEPEPEMIEGLPASDALTPADRYLELFEHVQSTKLFPDSKTFPDCAPKMDPLDILIRYRKVRRHRDFDLRRFVENHFWLPETLSSEYVSNPENSLKEHIDQLWPILTREPQDHIPWSSLLALPQSYIVPGGRFSETYYWDSYFTMLGLAESGREDLLKCMADNFAWMIENYGHIPNGNRTYYLSRSQPPVFALMVELFEEDGVRGARRYLDHLKMEYAFWMDGAESLALNQAYRHVVRMPDGSLLNRYWDDRDTPRDESWLEDVETAKHSGRPPNEVYRDLRAGAASGWDYSSRWLRDAGRLASIRTTQFIPIDLNAFLYKLESAIANISALKGERDTEALFRQKASDRRAAVNHYLWDDENGCYRDYDWRREEMALFSAASIVPLYVGMANHEQADRLANVVRSRLLTPGGIMATEYETGEQWDKPNGWAPLQWMAIQGFKLYGDDMLGDEIAHNWLKTVNHFYQEHHKLIEKYHISGGTPREGGGGEYPLQDGFGWTNGVVRRLIGLYGEP</sequence>
<accession>B4TZ02</accession>
<gene>
    <name evidence="1" type="primary">treF</name>
    <name type="ordered locus">SeSA_A3797</name>
</gene>
<proteinExistence type="inferred from homology"/>
<keyword id="KW-0963">Cytoplasm</keyword>
<keyword id="KW-0326">Glycosidase</keyword>
<keyword id="KW-0378">Hydrolase</keyword>
<reference key="1">
    <citation type="journal article" date="2011" name="J. Bacteriol.">
        <title>Comparative genomics of 28 Salmonella enterica isolates: evidence for CRISPR-mediated adaptive sublineage evolution.</title>
        <authorList>
            <person name="Fricke W.F."/>
            <person name="Mammel M.K."/>
            <person name="McDermott P.F."/>
            <person name="Tartera C."/>
            <person name="White D.G."/>
            <person name="Leclerc J.E."/>
            <person name="Ravel J."/>
            <person name="Cebula T.A."/>
        </authorList>
    </citation>
    <scope>NUCLEOTIDE SEQUENCE [LARGE SCALE GENOMIC DNA]</scope>
    <source>
        <strain>CVM19633</strain>
    </source>
</reference>
<protein>
    <recommendedName>
        <fullName evidence="1">Cytoplasmic trehalase</fullName>
        <ecNumber evidence="1">3.2.1.28</ecNumber>
    </recommendedName>
    <alternativeName>
        <fullName evidence="1">Alpha,alpha-trehalase</fullName>
    </alternativeName>
    <alternativeName>
        <fullName evidence="1">Alpha,alpha-trehalose glucohydrolase</fullName>
    </alternativeName>
</protein>
<dbReference type="EC" id="3.2.1.28" evidence="1"/>
<dbReference type="EMBL" id="CP001127">
    <property type="protein sequence ID" value="ACF92292.1"/>
    <property type="molecule type" value="Genomic_DNA"/>
</dbReference>
<dbReference type="RefSeq" id="WP_000934254.1">
    <property type="nucleotide sequence ID" value="NC_011094.1"/>
</dbReference>
<dbReference type="SMR" id="B4TZ02"/>
<dbReference type="CAZy" id="GH37">
    <property type="family name" value="Glycoside Hydrolase Family 37"/>
</dbReference>
<dbReference type="KEGG" id="sew:SeSA_A3797"/>
<dbReference type="HOGENOM" id="CLU_006451_3_1_6"/>
<dbReference type="UniPathway" id="UPA00300">
    <property type="reaction ID" value="UER00535"/>
</dbReference>
<dbReference type="Proteomes" id="UP000001865">
    <property type="component" value="Chromosome"/>
</dbReference>
<dbReference type="GO" id="GO:0005737">
    <property type="term" value="C:cytoplasm"/>
    <property type="evidence" value="ECO:0007669"/>
    <property type="project" value="UniProtKB-SubCell"/>
</dbReference>
<dbReference type="GO" id="GO:0004555">
    <property type="term" value="F:alpha,alpha-trehalase activity"/>
    <property type="evidence" value="ECO:0007669"/>
    <property type="project" value="UniProtKB-UniRule"/>
</dbReference>
<dbReference type="GO" id="GO:0071474">
    <property type="term" value="P:cellular hyperosmotic response"/>
    <property type="evidence" value="ECO:0007669"/>
    <property type="project" value="InterPro"/>
</dbReference>
<dbReference type="GO" id="GO:0005993">
    <property type="term" value="P:trehalose catabolic process"/>
    <property type="evidence" value="ECO:0007669"/>
    <property type="project" value="UniProtKB-UniRule"/>
</dbReference>
<dbReference type="FunFam" id="1.50.10.10:FF:000003">
    <property type="entry name" value="Cytoplasmic trehalase"/>
    <property type="match status" value="1"/>
</dbReference>
<dbReference type="Gene3D" id="1.50.10.10">
    <property type="match status" value="1"/>
</dbReference>
<dbReference type="HAMAP" id="MF_01059">
    <property type="entry name" value="Cyt_trehalase"/>
    <property type="match status" value="1"/>
</dbReference>
<dbReference type="InterPro" id="IPR008928">
    <property type="entry name" value="6-hairpin_glycosidase_sf"/>
</dbReference>
<dbReference type="InterPro" id="IPR012341">
    <property type="entry name" value="6hp_glycosidase-like_sf"/>
</dbReference>
<dbReference type="InterPro" id="IPR023715">
    <property type="entry name" value="Cyt_trehalase"/>
</dbReference>
<dbReference type="InterPro" id="IPR001661">
    <property type="entry name" value="Glyco_hydro_37"/>
</dbReference>
<dbReference type="InterPro" id="IPR018232">
    <property type="entry name" value="Glyco_hydro_37_CS"/>
</dbReference>
<dbReference type="NCBIfam" id="NF009773">
    <property type="entry name" value="PRK13270.1"/>
    <property type="match status" value="1"/>
</dbReference>
<dbReference type="NCBIfam" id="NF009774">
    <property type="entry name" value="PRK13271.1"/>
    <property type="match status" value="1"/>
</dbReference>
<dbReference type="PANTHER" id="PTHR23403:SF8">
    <property type="entry name" value="CYTOPLASMIC TREHALASE"/>
    <property type="match status" value="1"/>
</dbReference>
<dbReference type="PANTHER" id="PTHR23403">
    <property type="entry name" value="TREHALASE"/>
    <property type="match status" value="1"/>
</dbReference>
<dbReference type="Pfam" id="PF01204">
    <property type="entry name" value="Trehalase"/>
    <property type="match status" value="1"/>
</dbReference>
<dbReference type="PRINTS" id="PR00744">
    <property type="entry name" value="GLHYDRLASE37"/>
</dbReference>
<dbReference type="SUPFAM" id="SSF48208">
    <property type="entry name" value="Six-hairpin glycosidases"/>
    <property type="match status" value="1"/>
</dbReference>
<dbReference type="PROSITE" id="PS00927">
    <property type="entry name" value="TREHALASE_1"/>
    <property type="match status" value="1"/>
</dbReference>
<dbReference type="PROSITE" id="PS00928">
    <property type="entry name" value="TREHALASE_2"/>
    <property type="match status" value="1"/>
</dbReference>
<name>TREF_SALSV</name>
<organism>
    <name type="scientific">Salmonella schwarzengrund (strain CVM19633)</name>
    <dbReference type="NCBI Taxonomy" id="439843"/>
    <lineage>
        <taxon>Bacteria</taxon>
        <taxon>Pseudomonadati</taxon>
        <taxon>Pseudomonadota</taxon>
        <taxon>Gammaproteobacteria</taxon>
        <taxon>Enterobacterales</taxon>
        <taxon>Enterobacteriaceae</taxon>
        <taxon>Salmonella</taxon>
    </lineage>
</organism>
<comment type="function">
    <text evidence="1">Hydrolyzes trehalose to glucose. Could be involved, in cells returning to low osmolarity conditions, in the utilization of the accumulated cytoplasmic trehalose, which was synthesized in response to high osmolarity.</text>
</comment>
<comment type="catalytic activity">
    <reaction evidence="1">
        <text>alpha,alpha-trehalose + H2O = alpha-D-glucose + beta-D-glucose</text>
        <dbReference type="Rhea" id="RHEA:32675"/>
        <dbReference type="ChEBI" id="CHEBI:15377"/>
        <dbReference type="ChEBI" id="CHEBI:15903"/>
        <dbReference type="ChEBI" id="CHEBI:16551"/>
        <dbReference type="ChEBI" id="CHEBI:17925"/>
        <dbReference type="EC" id="3.2.1.28"/>
    </reaction>
</comment>
<comment type="pathway">
    <text evidence="1">Glycan degradation; trehalose degradation; D-glucose from alpha,alpha-trehalose: step 1/1.</text>
</comment>
<comment type="subunit">
    <text evidence="1">Monomer.</text>
</comment>
<comment type="subcellular location">
    <subcellularLocation>
        <location evidence="1">Cytoplasm</location>
    </subcellularLocation>
</comment>
<comment type="similarity">
    <text evidence="1">Belongs to the glycosyl hydrolase 37 family.</text>
</comment>
<evidence type="ECO:0000255" key="1">
    <source>
        <dbReference type="HAMAP-Rule" id="MF_01059"/>
    </source>
</evidence>
<feature type="chain" id="PRO_1000136414" description="Cytoplasmic trehalase">
    <location>
        <begin position="1"/>
        <end position="549"/>
    </location>
</feature>
<feature type="active site" description="Proton donor/acceptor" evidence="1">
    <location>
        <position position="326"/>
    </location>
</feature>
<feature type="active site" description="Proton donor/acceptor" evidence="1">
    <location>
        <position position="509"/>
    </location>
</feature>
<feature type="binding site" evidence="1">
    <location>
        <position position="168"/>
    </location>
    <ligand>
        <name>substrate</name>
    </ligand>
</feature>
<feature type="binding site" evidence="1">
    <location>
        <begin position="175"/>
        <end position="176"/>
    </location>
    <ligand>
        <name>substrate</name>
    </ligand>
</feature>
<feature type="binding site" evidence="1">
    <location>
        <position position="212"/>
    </location>
    <ligand>
        <name>substrate</name>
    </ligand>
</feature>
<feature type="binding site" evidence="1">
    <location>
        <begin position="221"/>
        <end position="223"/>
    </location>
    <ligand>
        <name>substrate</name>
    </ligand>
</feature>
<feature type="binding site" evidence="1">
    <location>
        <begin position="292"/>
        <end position="294"/>
    </location>
    <ligand>
        <name>substrate</name>
    </ligand>
</feature>
<feature type="binding site" evidence="1">
    <location>
        <position position="324"/>
    </location>
    <ligand>
        <name>substrate</name>
    </ligand>
</feature>
<feature type="binding site" evidence="1">
    <location>
        <position position="525"/>
    </location>
    <ligand>
        <name>substrate</name>
    </ligand>
</feature>